<keyword id="KW-1003">Cell membrane</keyword>
<keyword id="KW-0390">IgG-binding protein</keyword>
<keyword id="KW-0472">Membrane</keyword>
<keyword id="KW-0677">Repeat</keyword>
<keyword id="KW-0964">Secreted</keyword>
<keyword id="KW-0732">Signal</keyword>
<keyword id="KW-0843">Virulence</keyword>
<comment type="function">
    <text evidence="1">Plays a role in the inhibition of both the innate and adaptive immune responses. Possesses two N-terminal domains that bind the Fc region of IgG and two domains that form a tripartite complex with complement factors C3b and CFH. By recruiting CFH and C3b, the secreted form acts as a potent complement inhibitor of the alternative pathway-mediated lysis.</text>
</comment>
<comment type="subunit">
    <text evidence="1 2">Interacts (via sbi-I and sbi-II domains) with the Fc region of mammalian immunoglobulin G (IgG) proteins. Interacts (via sbi-III and sbi-IV domains) with host complement C3. Interacts (via sbi-III and sbi-IV domains) with host CFH (By similarity). Interacts (via sbi-IV domain) with beta-2-glycoprotein 1/APOH (By similarity).</text>
</comment>
<comment type="subcellular location">
    <subcellularLocation>
        <location evidence="1">Secreted</location>
    </subcellularLocation>
    <subcellularLocation>
        <location evidence="1">Cell membrane</location>
    </subcellularLocation>
    <text evidence="1">Occurs both extracellularly and associated with the cytoplasmic membrane where only the domains I and II are exposed to the extracellular media. Membrane association occurs via binding to lipoteichoic acid.</text>
</comment>
<comment type="domain">
    <text evidence="1">Sbi-I and sbi-II domains provide protection only when anchored to the cell surface, whereas only the secreted sbi-III and sbi-IV domains are biologically active.</text>
</comment>
<comment type="similarity">
    <text evidence="5">Belongs to the immunoglobulin-binding protein Sbi family.</text>
</comment>
<name>SBI_STAAB</name>
<accession>Q2YVZ4</accession>
<reference key="1">
    <citation type="journal article" date="2007" name="PLoS ONE">
        <title>Molecular correlates of host specialization in Staphylococcus aureus.</title>
        <authorList>
            <person name="Herron-Olson L."/>
            <person name="Fitzgerald J.R."/>
            <person name="Musser J.M."/>
            <person name="Kapur V."/>
        </authorList>
    </citation>
    <scope>NUCLEOTIDE SEQUENCE [LARGE SCALE GENOMIC DNA]</scope>
    <source>
        <strain>bovine RF122 / ET3-1</strain>
    </source>
</reference>
<sequence>MKNKYISKLLVGAATITLATMISNGEAKASENTQQTSTKHQTTQNNYITDQQKAFYQVLHLKGITEEQRNQYIKTLREHPERAQEVFSESLKDSKNPDRRVAQQNAFYNVLKNDNLTEQEKNNYIAQIKENPDRSQQVWVESVQSSKAKERQNIENADKAIKDFQDNKAPHDKSAAYEANSKLPKDLRDKNNRFVEKVSIEKAIVRHDERVKSANDAISKLNEKDSIENRRLAQREVNKAPMDVKEHLHKQLDALVAQKDAEKKVAPKVEAPQIQSPQIEKPKAESPKVEVPQIQSPKVEVPQSKLLGYYQSLKDSFNYGYKYLTDTYKSYKEKYDTAKYYTDKYFKYKGTIDKTVQSVFGNGYKSYIQPLKVEDQKNYVSKSYAQVRNYVTETLNTGKVLYAFYQNPKLVNAAITTAETATSIKNIFSSFTSFFK</sequence>
<protein>
    <recommendedName>
        <fullName>Immunoglobulin-binding protein Sbi</fullName>
    </recommendedName>
</protein>
<gene>
    <name type="primary">sbi</name>
    <name type="ordered locus">SAB2298</name>
</gene>
<dbReference type="EMBL" id="AJ938182">
    <property type="protein sequence ID" value="CAI81987.1"/>
    <property type="molecule type" value="Genomic_DNA"/>
</dbReference>
<dbReference type="RefSeq" id="WP_000792550.1">
    <property type="nucleotide sequence ID" value="NC_007622.1"/>
</dbReference>
<dbReference type="SMR" id="Q2YVZ4"/>
<dbReference type="KEGG" id="sab:SAB2298"/>
<dbReference type="HOGENOM" id="CLU_051343_0_0_9"/>
<dbReference type="PRO" id="PR:Q2YVZ4"/>
<dbReference type="GO" id="GO:0005576">
    <property type="term" value="C:extracellular region"/>
    <property type="evidence" value="ECO:0007669"/>
    <property type="project" value="UniProtKB-SubCell"/>
</dbReference>
<dbReference type="GO" id="GO:0005886">
    <property type="term" value="C:plasma membrane"/>
    <property type="evidence" value="ECO:0007669"/>
    <property type="project" value="UniProtKB-SubCell"/>
</dbReference>
<dbReference type="GO" id="GO:0019864">
    <property type="term" value="F:IgG binding"/>
    <property type="evidence" value="ECO:0007669"/>
    <property type="project" value="UniProtKB-KW"/>
</dbReference>
<dbReference type="Gene3D" id="1.20.5.420">
    <property type="entry name" value="Immunoglobulin FC, subunit C"/>
    <property type="match status" value="2"/>
</dbReference>
<dbReference type="Gene3D" id="1.10.10.1270">
    <property type="entry name" value="Sbi, C3 binding domain IV"/>
    <property type="match status" value="1"/>
</dbReference>
<dbReference type="InterPro" id="IPR009063">
    <property type="entry name" value="Ig/albumin-bd_sf"/>
</dbReference>
<dbReference type="InterPro" id="IPR021657">
    <property type="entry name" value="IgG-binding_Sbi_dom_IV"/>
</dbReference>
<dbReference type="InterPro" id="IPR003132">
    <property type="entry name" value="Protein_A_Ig-bd"/>
</dbReference>
<dbReference type="InterPro" id="IPR041909">
    <property type="entry name" value="Sbi_C3_db_domIV"/>
</dbReference>
<dbReference type="Pfam" id="PF02216">
    <property type="entry name" value="B"/>
    <property type="match status" value="2"/>
</dbReference>
<dbReference type="Pfam" id="PF11621">
    <property type="entry name" value="Sbi-IV"/>
    <property type="match status" value="1"/>
</dbReference>
<dbReference type="SUPFAM" id="SSF46997">
    <property type="entry name" value="Bacterial immunoglobulin/albumin-binding domains"/>
    <property type="match status" value="2"/>
</dbReference>
<evidence type="ECO:0000250" key="1">
    <source>
        <dbReference type="UniProtKB" id="A6QJQ7"/>
    </source>
</evidence>
<evidence type="ECO:0000250" key="2">
    <source>
        <dbReference type="UniProtKB" id="Q931F4"/>
    </source>
</evidence>
<evidence type="ECO:0000255" key="3"/>
<evidence type="ECO:0000256" key="4">
    <source>
        <dbReference type="SAM" id="MobiDB-lite"/>
    </source>
</evidence>
<evidence type="ECO:0000305" key="5"/>
<organism>
    <name type="scientific">Staphylococcus aureus (strain bovine RF122 / ET3-1)</name>
    <dbReference type="NCBI Taxonomy" id="273036"/>
    <lineage>
        <taxon>Bacteria</taxon>
        <taxon>Bacillati</taxon>
        <taxon>Bacillota</taxon>
        <taxon>Bacilli</taxon>
        <taxon>Bacillales</taxon>
        <taxon>Staphylococcaceae</taxon>
        <taxon>Staphylococcus</taxon>
    </lineage>
</organism>
<proteinExistence type="inferred from homology"/>
<feature type="signal peptide" evidence="3">
    <location>
        <begin position="1"/>
        <end position="29"/>
    </location>
</feature>
<feature type="chain" id="PRO_0000361886" description="Immunoglobulin-binding protein Sbi">
    <location>
        <begin position="30"/>
        <end position="436"/>
    </location>
</feature>
<feature type="repeat" description="B 1">
    <location>
        <begin position="43"/>
        <end position="94"/>
    </location>
</feature>
<feature type="repeat" description="B 2">
    <location>
        <begin position="95"/>
        <end position="148"/>
    </location>
</feature>
<feature type="repeat" description="2-1">
    <location>
        <begin position="267"/>
        <end position="271"/>
    </location>
</feature>
<feature type="repeat" description="2-2">
    <location>
        <begin position="272"/>
        <end position="276"/>
    </location>
</feature>
<feature type="repeat" description="2-3">
    <location>
        <begin position="277"/>
        <end position="281"/>
    </location>
</feature>
<feature type="repeat" description="2-4">
    <location>
        <begin position="282"/>
        <end position="286"/>
    </location>
</feature>
<feature type="repeat" description="2-5">
    <location>
        <begin position="287"/>
        <end position="291"/>
    </location>
</feature>
<feature type="repeat" description="2-6">
    <location>
        <begin position="292"/>
        <end position="296"/>
    </location>
</feature>
<feature type="repeat" description="2-7">
    <location>
        <begin position="297"/>
        <end position="301"/>
    </location>
</feature>
<feature type="repeat" description="2-8">
    <location>
        <begin position="302"/>
        <end position="306"/>
    </location>
</feature>
<feature type="region of interest" description="Sbi-I">
    <location>
        <begin position="42"/>
        <end position="94"/>
    </location>
</feature>
<feature type="region of interest" description="Sbi-II">
    <location>
        <begin position="103"/>
        <end position="153"/>
    </location>
</feature>
<feature type="region of interest" description="Sbi-III">
    <location>
        <begin position="154"/>
        <end position="195"/>
    </location>
</feature>
<feature type="region of interest" description="Sbi-IV">
    <location>
        <begin position="196"/>
        <end position="253"/>
    </location>
</feature>
<feature type="region of interest" description="8 X 5 AA tandem repeat of P-[KQ]-[AISV]-[EKQ]-[AKLSV]">
    <location>
        <begin position="267"/>
        <end position="306"/>
    </location>
</feature>
<feature type="region of interest" description="Disordered" evidence="4">
    <location>
        <begin position="268"/>
        <end position="295"/>
    </location>
</feature>